<gene>
    <name type="primary">setd1b</name>
</gene>
<name>SET1B_XENLA</name>
<evidence type="ECO:0000250" key="1">
    <source>
        <dbReference type="UniProtKB" id="O15047"/>
    </source>
</evidence>
<evidence type="ECO:0000250" key="2">
    <source>
        <dbReference type="UniProtKB" id="P38827"/>
    </source>
</evidence>
<evidence type="ECO:0000250" key="3">
    <source>
        <dbReference type="UniProtKB" id="Q9UPS6"/>
    </source>
</evidence>
<evidence type="ECO:0000255" key="4">
    <source>
        <dbReference type="PROSITE-ProRule" id="PRU00155"/>
    </source>
</evidence>
<evidence type="ECO:0000255" key="5">
    <source>
        <dbReference type="PROSITE-ProRule" id="PRU00176"/>
    </source>
</evidence>
<evidence type="ECO:0000255" key="6">
    <source>
        <dbReference type="PROSITE-ProRule" id="PRU00190"/>
    </source>
</evidence>
<evidence type="ECO:0000256" key="7">
    <source>
        <dbReference type="SAM" id="MobiDB-lite"/>
    </source>
</evidence>
<accession>Q66J90</accession>
<sequence>MSFKEAKPGERGKNPEDHGRKQAASWMNGMEAANQPSTSAEKKSHHWRSYKLIIDPALRKGQQKLYRYDGLSFSMPNSGAPPVDSVRDPRIGRIWTKTKELDLPVPKLKIDEFYVGPVPPKQVTFAKLNDNIRENFLGDMCKKYGEVEEVEILYNPKNKKHLGIAKVIFATVKGAKDAVKHLHNTSVMGNIIHAELDTKGETRMRFYELLVNGYYTPQTLPVGSDLDASPTVNETPQVVEPVKRTKETAVGASVTPNSSTPFSHDTAYSSSRQGTPNSYSQFTPQSQGTPHTPRLGTPFSQDSSYSSRQTTPAFHYGQDSSFKPRRHENKFTDAYNRRPGHHYVHSSGSYRGPENTFNVTRPQAETVQFPRTPPLSHSSGNNKSAFSPYQGSTVFPQTDDNQYPQTSRDMEYRRTGPPTSDSYSDGSLELKLVKEKPEEPPPPEPDSTTEQKASFAQTPERCATPGTPTLEAEMQHDSLDTRIAMLLKEQRTQLHLISSDQNSDSEIRMEGSPISSSSSQLSPIPPYSSSSHYQDVTPSSRPSSTGLEDISPTPLPDSDDDEPIPGTASLCQNSRSASPIDQINQPVRKMETLDNKELVVGDETPTSEKMDEGHPSSGEDMEISDDEVTPSPITSAECAITSSSVIPILPPGFPPLPPPPPPQSGFPMPPPLPPPPPPTHPSVTVPPPPLPAPPGVPPHHILHHPPPYHHFPVMQGEMMNVLGNHWGGMTMSFQMQTQMLSRMMQGQGSYPYHHFMGGSMQFGNQLPYRPFALSAHLSRGQPWPPLPKFDPSVPPPGYEPKKEDPHKATVDGVLQVIVKELKAIMKRDLNRKMVEVVAFRAFDEWWDKKERLAKQSLTPVKSGESKDEDKQKTKEHITSSLLESWNKGEGLGFEGIGLGIGLRGAIRLPSFKVKRKEPPDAALAGDQKRIRPSHSVDDEDEESERDRDISGTASDLSKKDADAVNIRRRPARPLDSEGEEEVESEGDDGETSDKEAFEKEDQDAGSVSALSSKKRLYGEKEDEEDETQSSGKEEDLVSEEEDITSVASSRAEMDSSDESDESSEYESSSDSDDEIEEEDDDDEEEELVFEDDQSEELDLGQEDYIETDREEDFFKEDVSECSSPVKAEADMELEDDDVQKLEQDVAHQTAQDTSHLRKKDLDVPLVESKEHKQDTFDKMERLSAVPMQQNVFKEHEKAPSPMNEEEEYIELRLEPVPLVPDNAPPAVQEPMIIRPLTPTGAFGESGPVLKLEEPKLQVNLAHFVAEDEDLYPRTPGRDTAAHSDTEVTFQPGLKVAPSSLPLLQSHNKEEECLLPPEKHTGHLKVTKTLSEEELPRTPGRDILVKSSHLGKSQSTETIPATPGSDAPLTGNSLTLTSPHIPGSPFSYLSQSPGIINSGIPRTPGRDFNFTPIFPESNSIFPSHPSGKKSSVDEPDEKSFKEPTSASLTMNSVPSPIPFASPPRGVPHMDIRLETDDLESSDTQAYLSDKLLSEESECEFTKGQLPSTDESAPSPPFPPTDKRKGPKKPLAAHEFEACVALSEGALGKQLFIGQPDSVSGIKDPAAVPLDFRNDGLSENTVHDPIIQKVPLKELENQWNEVLKEEEEDISKHKKSRNSRLNKLYDEFSTLPSPEYSPPRAMFKPRSEFEEMTILYDIWNGGIDDEDMKYMCITYDRLLQQDNGMDWLNDTLWVYHPPTSVYSPKKKKRDDGLREHVTGCARSEGYYKIDKKDKLKYLINNRSLADEPPIDTQGKSIPAQPQASTRAGSERRSEQRRLLSSFTGSCDSDLLKFNQLKFRKKKIRFCKSHIHDWGLFAMEPIVADEMVIEYVGQNIRQVIADMREKRYEDEGIGSSYMFRVDHDTIIDATKCGNFARFINHSCNPNCYAKVVTVESQKKIVIYSKQYINVNEEITYDYKFPIEDVKIPCLCGAENCRGTLN</sequence>
<feature type="chain" id="PRO_0000316997" description="Histone-lysine N-methyltransferase SETD1B">
    <location>
        <begin position="1"/>
        <end position="1938"/>
    </location>
</feature>
<feature type="domain" description="RRM" evidence="5">
    <location>
        <begin position="111"/>
        <end position="199"/>
    </location>
</feature>
<feature type="domain" description="SET" evidence="6">
    <location>
        <begin position="1799"/>
        <end position="1916"/>
    </location>
</feature>
<feature type="domain" description="Post-SET" evidence="4">
    <location>
        <begin position="1922"/>
        <end position="1938"/>
    </location>
</feature>
<feature type="region of interest" description="Disordered" evidence="7">
    <location>
        <begin position="1"/>
        <end position="44"/>
    </location>
</feature>
<feature type="region of interest" description="Disordered" evidence="7">
    <location>
        <begin position="226"/>
        <end position="357"/>
    </location>
</feature>
<feature type="region of interest" description="Disordered" evidence="7">
    <location>
        <begin position="369"/>
        <end position="484"/>
    </location>
</feature>
<feature type="region of interest" description="Disordered" evidence="7">
    <location>
        <begin position="496"/>
        <end position="630"/>
    </location>
</feature>
<feature type="region of interest" description="Disordered" evidence="7">
    <location>
        <begin position="652"/>
        <end position="688"/>
    </location>
</feature>
<feature type="region of interest" description="Disordered" evidence="7">
    <location>
        <begin position="916"/>
        <end position="1125"/>
    </location>
</feature>
<feature type="region of interest" description="Disordered" evidence="7">
    <location>
        <begin position="1147"/>
        <end position="1174"/>
    </location>
</feature>
<feature type="region of interest" description="Disordered" evidence="7">
    <location>
        <begin position="1187"/>
        <end position="1206"/>
    </location>
</feature>
<feature type="region of interest" description="Disordered" evidence="7">
    <location>
        <begin position="1327"/>
        <end position="1373"/>
    </location>
</feature>
<feature type="region of interest" description="Disordered" evidence="7">
    <location>
        <begin position="1413"/>
        <end position="1468"/>
    </location>
</feature>
<feature type="region of interest" description="Disordered" evidence="7">
    <location>
        <begin position="1496"/>
        <end position="1528"/>
    </location>
</feature>
<feature type="region of interest" description="Disordered" evidence="7">
    <location>
        <begin position="1744"/>
        <end position="1772"/>
    </location>
</feature>
<feature type="short sequence motif" description="RxxxRR motif" evidence="2">
    <location>
        <begin position="1770"/>
        <end position="1775"/>
    </location>
</feature>
<feature type="compositionally biased region" description="Basic and acidic residues" evidence="7">
    <location>
        <begin position="1"/>
        <end position="20"/>
    </location>
</feature>
<feature type="compositionally biased region" description="Polar residues" evidence="7">
    <location>
        <begin position="254"/>
        <end position="290"/>
    </location>
</feature>
<feature type="compositionally biased region" description="Polar residues" evidence="7">
    <location>
        <begin position="298"/>
        <end position="312"/>
    </location>
</feature>
<feature type="compositionally biased region" description="Polar residues" evidence="7">
    <location>
        <begin position="375"/>
        <end position="407"/>
    </location>
</feature>
<feature type="compositionally biased region" description="Polar residues" evidence="7">
    <location>
        <begin position="446"/>
        <end position="457"/>
    </location>
</feature>
<feature type="compositionally biased region" description="Low complexity" evidence="7">
    <location>
        <begin position="512"/>
        <end position="531"/>
    </location>
</feature>
<feature type="compositionally biased region" description="Polar residues" evidence="7">
    <location>
        <begin position="532"/>
        <end position="546"/>
    </location>
</feature>
<feature type="compositionally biased region" description="Polar residues" evidence="7">
    <location>
        <begin position="569"/>
        <end position="585"/>
    </location>
</feature>
<feature type="compositionally biased region" description="Basic and acidic residues" evidence="7">
    <location>
        <begin position="588"/>
        <end position="599"/>
    </location>
</feature>
<feature type="compositionally biased region" description="Acidic residues" evidence="7">
    <location>
        <begin position="619"/>
        <end position="628"/>
    </location>
</feature>
<feature type="compositionally biased region" description="Acidic residues" evidence="7">
    <location>
        <begin position="976"/>
        <end position="990"/>
    </location>
</feature>
<feature type="compositionally biased region" description="Acidic residues" evidence="7">
    <location>
        <begin position="1054"/>
        <end position="1114"/>
    </location>
</feature>
<feature type="compositionally biased region" description="Basic and acidic residues" evidence="7">
    <location>
        <begin position="1159"/>
        <end position="1174"/>
    </location>
</feature>
<feature type="compositionally biased region" description="Basic and acidic residues" evidence="7">
    <location>
        <begin position="1329"/>
        <end position="1343"/>
    </location>
</feature>
<feature type="compositionally biased region" description="Polar residues" evidence="7">
    <location>
        <begin position="1349"/>
        <end position="1358"/>
    </location>
</feature>
<feature type="compositionally biased region" description="Polar residues" evidence="7">
    <location>
        <begin position="1441"/>
        <end position="1453"/>
    </location>
</feature>
<feature type="compositionally biased region" description="Pro residues" evidence="7">
    <location>
        <begin position="1454"/>
        <end position="1464"/>
    </location>
</feature>
<feature type="compositionally biased region" description="Polar residues" evidence="7">
    <location>
        <begin position="1751"/>
        <end position="1765"/>
    </location>
</feature>
<feature type="binding site" evidence="6">
    <location>
        <position position="1915"/>
    </location>
    <ligand>
        <name>S-adenosyl-L-methionine</name>
        <dbReference type="ChEBI" id="CHEBI:59789"/>
    </ligand>
</feature>
<organism>
    <name type="scientific">Xenopus laevis</name>
    <name type="common">African clawed frog</name>
    <dbReference type="NCBI Taxonomy" id="8355"/>
    <lineage>
        <taxon>Eukaryota</taxon>
        <taxon>Metazoa</taxon>
        <taxon>Chordata</taxon>
        <taxon>Craniata</taxon>
        <taxon>Vertebrata</taxon>
        <taxon>Euteleostomi</taxon>
        <taxon>Amphibia</taxon>
        <taxon>Batrachia</taxon>
        <taxon>Anura</taxon>
        <taxon>Pipoidea</taxon>
        <taxon>Pipidae</taxon>
        <taxon>Xenopodinae</taxon>
        <taxon>Xenopus</taxon>
        <taxon>Xenopus</taxon>
    </lineage>
</organism>
<protein>
    <recommendedName>
        <fullName>Histone-lysine N-methyltransferase SETD1B</fullName>
        <ecNumber evidence="3">2.1.1.354</ecNumber>
    </recommendedName>
    <alternativeName>
        <fullName>SET domain-containing protein 1B</fullName>
    </alternativeName>
</protein>
<keyword id="KW-0010">Activator</keyword>
<keyword id="KW-0156">Chromatin regulator</keyword>
<keyword id="KW-0158">Chromosome</keyword>
<keyword id="KW-0489">Methyltransferase</keyword>
<keyword id="KW-0539">Nucleus</keyword>
<keyword id="KW-1185">Reference proteome</keyword>
<keyword id="KW-0694">RNA-binding</keyword>
<keyword id="KW-0949">S-adenosyl-L-methionine</keyword>
<keyword id="KW-0804">Transcription</keyword>
<keyword id="KW-0805">Transcription regulation</keyword>
<keyword id="KW-0808">Transferase</keyword>
<proteinExistence type="evidence at transcript level"/>
<comment type="function">
    <text evidence="1">Histone methyltransferase that specifically methylates 'Lys-4' of histone H3, when part of the SET1 histone methyltransferase (HMT) complex, but not if the neighboring 'Lys-9' residue is already methylated. H3 'Lys-4' methylation represents a specific tag for epigenetic transcriptional activation.</text>
</comment>
<comment type="catalytic activity">
    <reaction evidence="3">
        <text>L-lysyl(4)-[histone H3] + 3 S-adenosyl-L-methionine = N(6),N(6),N(6)-trimethyl-L-lysyl(4)-[histone H3] + 3 S-adenosyl-L-homocysteine + 3 H(+)</text>
        <dbReference type="Rhea" id="RHEA:60260"/>
        <dbReference type="Rhea" id="RHEA-COMP:15537"/>
        <dbReference type="Rhea" id="RHEA-COMP:15547"/>
        <dbReference type="ChEBI" id="CHEBI:15378"/>
        <dbReference type="ChEBI" id="CHEBI:29969"/>
        <dbReference type="ChEBI" id="CHEBI:57856"/>
        <dbReference type="ChEBI" id="CHEBI:59789"/>
        <dbReference type="ChEBI" id="CHEBI:61961"/>
        <dbReference type="EC" id="2.1.1.354"/>
    </reaction>
</comment>
<comment type="subunit">
    <text evidence="3">Component of the SET1B/COMPASS complex.</text>
</comment>
<comment type="subcellular location">
    <subcellularLocation>
        <location evidence="3">Nucleus speckle</location>
    </subcellularLocation>
    <subcellularLocation>
        <location evidence="3">Chromosome</location>
    </subcellularLocation>
</comment>
<comment type="similarity">
    <text evidence="6">Belongs to the class V-like SAM-binding methyltransferase superfamily.</text>
</comment>
<reference key="1">
    <citation type="submission" date="2004-08" db="EMBL/GenBank/DDBJ databases">
        <authorList>
            <consortium name="NIH - Xenopus Gene Collection (XGC) project"/>
        </authorList>
    </citation>
    <scope>NUCLEOTIDE SEQUENCE [LARGE SCALE MRNA]</scope>
    <source>
        <tissue>Embryo</tissue>
    </source>
</reference>
<dbReference type="EC" id="2.1.1.354" evidence="3"/>
<dbReference type="EMBL" id="BC081016">
    <property type="protein sequence ID" value="AAH81016.1"/>
    <property type="molecule type" value="mRNA"/>
</dbReference>
<dbReference type="RefSeq" id="NP_001087630.1">
    <property type="nucleotide sequence ID" value="NM_001094161.1"/>
</dbReference>
<dbReference type="SMR" id="Q66J90"/>
<dbReference type="DNASU" id="447454"/>
<dbReference type="GeneID" id="447454"/>
<dbReference type="KEGG" id="xla:447454"/>
<dbReference type="AGR" id="Xenbase:XB-GENE-5842376"/>
<dbReference type="CTD" id="447454"/>
<dbReference type="Xenbase" id="XB-GENE-5842376">
    <property type="gene designation" value="setd1b.S"/>
</dbReference>
<dbReference type="OMA" id="LPCMHGD"/>
<dbReference type="OrthoDB" id="308383at2759"/>
<dbReference type="Proteomes" id="UP000186698">
    <property type="component" value="Chromosome 1S"/>
</dbReference>
<dbReference type="Bgee" id="447454">
    <property type="expression patterns" value="Expressed in egg cell and 13 other cell types or tissues"/>
</dbReference>
<dbReference type="GO" id="GO:0005694">
    <property type="term" value="C:chromosome"/>
    <property type="evidence" value="ECO:0007669"/>
    <property type="project" value="UniProtKB-SubCell"/>
</dbReference>
<dbReference type="GO" id="GO:0005737">
    <property type="term" value="C:cytoplasm"/>
    <property type="evidence" value="ECO:0000250"/>
    <property type="project" value="UniProtKB"/>
</dbReference>
<dbReference type="GO" id="GO:0016607">
    <property type="term" value="C:nuclear speck"/>
    <property type="evidence" value="ECO:0007669"/>
    <property type="project" value="UniProtKB-SubCell"/>
</dbReference>
<dbReference type="GO" id="GO:0005634">
    <property type="term" value="C:nucleus"/>
    <property type="evidence" value="ECO:0000250"/>
    <property type="project" value="UniProtKB"/>
</dbReference>
<dbReference type="GO" id="GO:0048188">
    <property type="term" value="C:Set1C/COMPASS complex"/>
    <property type="evidence" value="ECO:0000318"/>
    <property type="project" value="GO_Central"/>
</dbReference>
<dbReference type="GO" id="GO:0042800">
    <property type="term" value="F:histone H3K4 methyltransferase activity"/>
    <property type="evidence" value="ECO:0000318"/>
    <property type="project" value="GO_Central"/>
</dbReference>
<dbReference type="GO" id="GO:0140999">
    <property type="term" value="F:histone H3K4 trimethyltransferase activity"/>
    <property type="evidence" value="ECO:0007669"/>
    <property type="project" value="UniProtKB-EC"/>
</dbReference>
<dbReference type="GO" id="GO:0003723">
    <property type="term" value="F:RNA binding"/>
    <property type="evidence" value="ECO:0007669"/>
    <property type="project" value="UniProtKB-KW"/>
</dbReference>
<dbReference type="GO" id="GO:0032259">
    <property type="term" value="P:methylation"/>
    <property type="evidence" value="ECO:0007669"/>
    <property type="project" value="UniProtKB-KW"/>
</dbReference>
<dbReference type="CDD" id="cd12549">
    <property type="entry name" value="RRM_Set1B"/>
    <property type="match status" value="1"/>
</dbReference>
<dbReference type="CDD" id="cd19169">
    <property type="entry name" value="SET_SETD1"/>
    <property type="match status" value="1"/>
</dbReference>
<dbReference type="FunFam" id="2.170.270.10:FF:000010">
    <property type="entry name" value="Histone-lysine N-methyltransferase"/>
    <property type="match status" value="1"/>
</dbReference>
<dbReference type="FunFam" id="3.30.70.330:FF:000178">
    <property type="entry name" value="Histone-lysine N-methyltransferase"/>
    <property type="match status" value="1"/>
</dbReference>
<dbReference type="Gene3D" id="3.30.70.330">
    <property type="match status" value="1"/>
</dbReference>
<dbReference type="Gene3D" id="2.170.270.10">
    <property type="entry name" value="SET domain"/>
    <property type="match status" value="1"/>
</dbReference>
<dbReference type="InterPro" id="IPR024657">
    <property type="entry name" value="COMPASS_Set1_N-SET"/>
</dbReference>
<dbReference type="InterPro" id="IPR012677">
    <property type="entry name" value="Nucleotide-bd_a/b_plait_sf"/>
</dbReference>
<dbReference type="InterPro" id="IPR003616">
    <property type="entry name" value="Post-SET_dom"/>
</dbReference>
<dbReference type="InterPro" id="IPR035979">
    <property type="entry name" value="RBD_domain_sf"/>
</dbReference>
<dbReference type="InterPro" id="IPR000504">
    <property type="entry name" value="RRM_dom"/>
</dbReference>
<dbReference type="InterPro" id="IPR044570">
    <property type="entry name" value="Set1-like"/>
</dbReference>
<dbReference type="InterPro" id="IPR034468">
    <property type="entry name" value="Set1B_RRM"/>
</dbReference>
<dbReference type="InterPro" id="IPR001214">
    <property type="entry name" value="SET_dom"/>
</dbReference>
<dbReference type="InterPro" id="IPR046341">
    <property type="entry name" value="SET_dom_sf"/>
</dbReference>
<dbReference type="InterPro" id="IPR037841">
    <property type="entry name" value="SET_SETD1A/B"/>
</dbReference>
<dbReference type="PANTHER" id="PTHR45814">
    <property type="entry name" value="HISTONE-LYSINE N-METHYLTRANSFERASE SETD1"/>
    <property type="match status" value="1"/>
</dbReference>
<dbReference type="PANTHER" id="PTHR45814:SF1">
    <property type="entry name" value="HISTONE-LYSINE N-METHYLTRANSFERASE SETD1B"/>
    <property type="match status" value="1"/>
</dbReference>
<dbReference type="Pfam" id="PF11764">
    <property type="entry name" value="N-SET"/>
    <property type="match status" value="1"/>
</dbReference>
<dbReference type="Pfam" id="PF00076">
    <property type="entry name" value="RRM_1"/>
    <property type="match status" value="1"/>
</dbReference>
<dbReference type="Pfam" id="PF00856">
    <property type="entry name" value="SET"/>
    <property type="match status" value="1"/>
</dbReference>
<dbReference type="SMART" id="SM01291">
    <property type="entry name" value="N-SET"/>
    <property type="match status" value="1"/>
</dbReference>
<dbReference type="SMART" id="SM00508">
    <property type="entry name" value="PostSET"/>
    <property type="match status" value="1"/>
</dbReference>
<dbReference type="SMART" id="SM00360">
    <property type="entry name" value="RRM"/>
    <property type="match status" value="1"/>
</dbReference>
<dbReference type="SMART" id="SM00317">
    <property type="entry name" value="SET"/>
    <property type="match status" value="1"/>
</dbReference>
<dbReference type="SUPFAM" id="SSF54928">
    <property type="entry name" value="RNA-binding domain, RBD"/>
    <property type="match status" value="1"/>
</dbReference>
<dbReference type="SUPFAM" id="SSF82199">
    <property type="entry name" value="SET domain"/>
    <property type="match status" value="1"/>
</dbReference>
<dbReference type="PROSITE" id="PS50868">
    <property type="entry name" value="POST_SET"/>
    <property type="match status" value="1"/>
</dbReference>
<dbReference type="PROSITE" id="PS50102">
    <property type="entry name" value="RRM"/>
    <property type="match status" value="1"/>
</dbReference>
<dbReference type="PROSITE" id="PS50280">
    <property type="entry name" value="SET"/>
    <property type="match status" value="1"/>
</dbReference>